<sequence>MSESVEQHWSVYLIRNNRNALYCGVTNDIERRFKQHQLGKGAKALKGKGPLVLEWSTSFDSKVTAMRAEYFIKQLTKSKKEQLVELKALIAVDDNQQVMFESCSQS</sequence>
<proteinExistence type="inferred from homology"/>
<accession>Q87GU3</accession>
<comment type="similarity">
    <text evidence="2">Belongs to the UPF0213 family.</text>
</comment>
<organism>
    <name type="scientific">Vibrio parahaemolyticus serotype O3:K6 (strain RIMD 2210633)</name>
    <dbReference type="NCBI Taxonomy" id="223926"/>
    <lineage>
        <taxon>Bacteria</taxon>
        <taxon>Pseudomonadati</taxon>
        <taxon>Pseudomonadota</taxon>
        <taxon>Gammaproteobacteria</taxon>
        <taxon>Vibrionales</taxon>
        <taxon>Vibrionaceae</taxon>
        <taxon>Vibrio</taxon>
    </lineage>
</organism>
<reference key="1">
    <citation type="journal article" date="2003" name="Lancet">
        <title>Genome sequence of Vibrio parahaemolyticus: a pathogenic mechanism distinct from that of V. cholerae.</title>
        <authorList>
            <person name="Makino K."/>
            <person name="Oshima K."/>
            <person name="Kurokawa K."/>
            <person name="Yokoyama K."/>
            <person name="Uda T."/>
            <person name="Tagomori K."/>
            <person name="Iijima Y."/>
            <person name="Najima M."/>
            <person name="Nakano M."/>
            <person name="Yamashita A."/>
            <person name="Kubota Y."/>
            <person name="Kimura S."/>
            <person name="Yasunaga T."/>
            <person name="Honda T."/>
            <person name="Shinagawa H."/>
            <person name="Hattori M."/>
            <person name="Iida T."/>
        </authorList>
    </citation>
    <scope>NUCLEOTIDE SEQUENCE [LARGE SCALE GENOMIC DNA]</scope>
    <source>
        <strain>RIMD 2210633</strain>
    </source>
</reference>
<dbReference type="EMBL" id="BA000032">
    <property type="protein sequence ID" value="BAC62565.1"/>
    <property type="molecule type" value="Genomic_DNA"/>
</dbReference>
<dbReference type="RefSeq" id="NP_800732.1">
    <property type="nucleotide sequence ID" value="NC_004605.1"/>
</dbReference>
<dbReference type="RefSeq" id="WP_005463466.1">
    <property type="nucleotide sequence ID" value="NC_004605.1"/>
</dbReference>
<dbReference type="SMR" id="Q87GU3"/>
<dbReference type="GeneID" id="1191918"/>
<dbReference type="KEGG" id="vpa:VPA1222"/>
<dbReference type="PATRIC" id="fig|223926.6.peg.4150"/>
<dbReference type="eggNOG" id="COG2827">
    <property type="taxonomic scope" value="Bacteria"/>
</dbReference>
<dbReference type="HOGENOM" id="CLU_135650_0_1_6"/>
<dbReference type="Proteomes" id="UP000002493">
    <property type="component" value="Chromosome 2"/>
</dbReference>
<dbReference type="CDD" id="cd10456">
    <property type="entry name" value="GIY-YIG_UPF0213"/>
    <property type="match status" value="1"/>
</dbReference>
<dbReference type="Gene3D" id="3.40.1440.10">
    <property type="entry name" value="GIY-YIG endonuclease"/>
    <property type="match status" value="1"/>
</dbReference>
<dbReference type="InterPro" id="IPR000305">
    <property type="entry name" value="GIY-YIG_endonuc"/>
</dbReference>
<dbReference type="InterPro" id="IPR035901">
    <property type="entry name" value="GIY-YIG_endonuc_sf"/>
</dbReference>
<dbReference type="InterPro" id="IPR050190">
    <property type="entry name" value="UPF0213_domain"/>
</dbReference>
<dbReference type="PANTHER" id="PTHR34477">
    <property type="entry name" value="UPF0213 PROTEIN YHBQ"/>
    <property type="match status" value="1"/>
</dbReference>
<dbReference type="PANTHER" id="PTHR34477:SF1">
    <property type="entry name" value="UPF0213 PROTEIN YHBQ"/>
    <property type="match status" value="1"/>
</dbReference>
<dbReference type="Pfam" id="PF01541">
    <property type="entry name" value="GIY-YIG"/>
    <property type="match status" value="1"/>
</dbReference>
<dbReference type="SMART" id="SM00465">
    <property type="entry name" value="GIYc"/>
    <property type="match status" value="1"/>
</dbReference>
<dbReference type="SUPFAM" id="SSF82771">
    <property type="entry name" value="GIY-YIG endonuclease"/>
    <property type="match status" value="1"/>
</dbReference>
<dbReference type="PROSITE" id="PS50164">
    <property type="entry name" value="GIY_YIG"/>
    <property type="match status" value="1"/>
</dbReference>
<feature type="chain" id="PRO_0000161399" description="UPF0213 protein VPA1222">
    <location>
        <begin position="1"/>
        <end position="106"/>
    </location>
</feature>
<feature type="domain" description="GIY-YIG" evidence="1">
    <location>
        <begin position="7"/>
        <end position="82"/>
    </location>
</feature>
<name>Y5222_VIBPA</name>
<evidence type="ECO:0000255" key="1">
    <source>
        <dbReference type="PROSITE-ProRule" id="PRU00977"/>
    </source>
</evidence>
<evidence type="ECO:0000305" key="2"/>
<gene>
    <name type="ordered locus">VPA1222</name>
</gene>
<protein>
    <recommendedName>
        <fullName>UPF0213 protein VPA1222</fullName>
    </recommendedName>
</protein>